<keyword id="KW-0028">Amino-acid biosynthesis</keyword>
<keyword id="KW-0963">Cytoplasm</keyword>
<keyword id="KW-0368">Histidine biosynthesis</keyword>
<keyword id="KW-0456">Lyase</keyword>
<evidence type="ECO:0000255" key="1">
    <source>
        <dbReference type="HAMAP-Rule" id="MF_00076"/>
    </source>
</evidence>
<name>HIS7_METMJ</name>
<accession>A3CTR8</accession>
<feature type="chain" id="PRO_0000336362" description="Imidazoleglycerol-phosphate dehydratase">
    <location>
        <begin position="1"/>
        <end position="193"/>
    </location>
</feature>
<dbReference type="EC" id="4.2.1.19" evidence="1"/>
<dbReference type="EMBL" id="CP000562">
    <property type="protein sequence ID" value="ABN56768.1"/>
    <property type="molecule type" value="Genomic_DNA"/>
</dbReference>
<dbReference type="RefSeq" id="WP_011843679.1">
    <property type="nucleotide sequence ID" value="NC_009051.1"/>
</dbReference>
<dbReference type="SMR" id="A3CTR8"/>
<dbReference type="STRING" id="368407.Memar_0835"/>
<dbReference type="GeneID" id="4846226"/>
<dbReference type="GeneID" id="76731404"/>
<dbReference type="KEGG" id="mem:Memar_0835"/>
<dbReference type="eggNOG" id="arCOG04398">
    <property type="taxonomic scope" value="Archaea"/>
</dbReference>
<dbReference type="HOGENOM" id="CLU_044308_3_0_2"/>
<dbReference type="OrthoDB" id="103579at2157"/>
<dbReference type="UniPathway" id="UPA00031">
    <property type="reaction ID" value="UER00011"/>
</dbReference>
<dbReference type="Proteomes" id="UP000002146">
    <property type="component" value="Chromosome"/>
</dbReference>
<dbReference type="GO" id="GO:0005737">
    <property type="term" value="C:cytoplasm"/>
    <property type="evidence" value="ECO:0007669"/>
    <property type="project" value="UniProtKB-SubCell"/>
</dbReference>
<dbReference type="GO" id="GO:0004424">
    <property type="term" value="F:imidazoleglycerol-phosphate dehydratase activity"/>
    <property type="evidence" value="ECO:0007669"/>
    <property type="project" value="UniProtKB-UniRule"/>
</dbReference>
<dbReference type="GO" id="GO:0000105">
    <property type="term" value="P:L-histidine biosynthetic process"/>
    <property type="evidence" value="ECO:0007669"/>
    <property type="project" value="UniProtKB-UniRule"/>
</dbReference>
<dbReference type="CDD" id="cd07914">
    <property type="entry name" value="IGPD"/>
    <property type="match status" value="1"/>
</dbReference>
<dbReference type="FunFam" id="3.30.230.40:FF:000001">
    <property type="entry name" value="Imidazoleglycerol-phosphate dehydratase HisB"/>
    <property type="match status" value="1"/>
</dbReference>
<dbReference type="FunFam" id="3.30.230.40:FF:000003">
    <property type="entry name" value="Imidazoleglycerol-phosphate dehydratase HisB"/>
    <property type="match status" value="1"/>
</dbReference>
<dbReference type="Gene3D" id="3.30.230.40">
    <property type="entry name" value="Imidazole glycerol phosphate dehydratase, domain 1"/>
    <property type="match status" value="2"/>
</dbReference>
<dbReference type="HAMAP" id="MF_00076">
    <property type="entry name" value="HisB"/>
    <property type="match status" value="1"/>
</dbReference>
<dbReference type="InterPro" id="IPR038494">
    <property type="entry name" value="IGPD_sf"/>
</dbReference>
<dbReference type="InterPro" id="IPR000807">
    <property type="entry name" value="ImidazoleglycerolP_deHydtase"/>
</dbReference>
<dbReference type="InterPro" id="IPR020565">
    <property type="entry name" value="ImidazoleglycerP_deHydtase_CS"/>
</dbReference>
<dbReference type="InterPro" id="IPR020568">
    <property type="entry name" value="Ribosomal_Su5_D2-typ_SF"/>
</dbReference>
<dbReference type="NCBIfam" id="NF002111">
    <property type="entry name" value="PRK00951.2-1"/>
    <property type="match status" value="1"/>
</dbReference>
<dbReference type="NCBIfam" id="NF002114">
    <property type="entry name" value="PRK00951.2-4"/>
    <property type="match status" value="1"/>
</dbReference>
<dbReference type="PANTHER" id="PTHR23133:SF2">
    <property type="entry name" value="IMIDAZOLEGLYCEROL-PHOSPHATE DEHYDRATASE"/>
    <property type="match status" value="1"/>
</dbReference>
<dbReference type="PANTHER" id="PTHR23133">
    <property type="entry name" value="IMIDAZOLEGLYCEROL-PHOSPHATE DEHYDRATASE HIS7"/>
    <property type="match status" value="1"/>
</dbReference>
<dbReference type="Pfam" id="PF00475">
    <property type="entry name" value="IGPD"/>
    <property type="match status" value="1"/>
</dbReference>
<dbReference type="SUPFAM" id="SSF54211">
    <property type="entry name" value="Ribosomal protein S5 domain 2-like"/>
    <property type="match status" value="2"/>
</dbReference>
<dbReference type="PROSITE" id="PS00954">
    <property type="entry name" value="IGP_DEHYDRATASE_1"/>
    <property type="match status" value="1"/>
</dbReference>
<dbReference type="PROSITE" id="PS00955">
    <property type="entry name" value="IGP_DEHYDRATASE_2"/>
    <property type="match status" value="1"/>
</dbReference>
<proteinExistence type="inferred from homology"/>
<sequence>MRTSEVHRATRETDITLSLDLDGTGAGTIETGIPFFDHMLASFARHGRIDLSVRATGDLAVDPHHTIEDIGIVLGTALAESVGDGRGITRFADAAVPMDEALARVALDVGGRGYLVFEGDFSPVGPGGIPGDLIEHFFHSLCSHAGITAHITVTGRNDHHICEAAFKAFARALRAAVAIDPAIGDVPSTKGSL</sequence>
<organism>
    <name type="scientific">Methanoculleus marisnigri (strain ATCC 35101 / DSM 1498 / JR1)</name>
    <dbReference type="NCBI Taxonomy" id="368407"/>
    <lineage>
        <taxon>Archaea</taxon>
        <taxon>Methanobacteriati</taxon>
        <taxon>Methanobacteriota</taxon>
        <taxon>Stenosarchaea group</taxon>
        <taxon>Methanomicrobia</taxon>
        <taxon>Methanomicrobiales</taxon>
        <taxon>Methanomicrobiaceae</taxon>
        <taxon>Methanoculleus</taxon>
    </lineage>
</organism>
<gene>
    <name evidence="1" type="primary">hisB</name>
    <name type="ordered locus">Memar_0835</name>
</gene>
<protein>
    <recommendedName>
        <fullName evidence="1">Imidazoleglycerol-phosphate dehydratase</fullName>
        <shortName evidence="1">IGPD</shortName>
        <ecNumber evidence="1">4.2.1.19</ecNumber>
    </recommendedName>
</protein>
<comment type="catalytic activity">
    <reaction evidence="1">
        <text>D-erythro-1-(imidazol-4-yl)glycerol 3-phosphate = 3-(imidazol-4-yl)-2-oxopropyl phosphate + H2O</text>
        <dbReference type="Rhea" id="RHEA:11040"/>
        <dbReference type="ChEBI" id="CHEBI:15377"/>
        <dbReference type="ChEBI" id="CHEBI:57766"/>
        <dbReference type="ChEBI" id="CHEBI:58278"/>
        <dbReference type="EC" id="4.2.1.19"/>
    </reaction>
</comment>
<comment type="pathway">
    <text evidence="1">Amino-acid biosynthesis; L-histidine biosynthesis; L-histidine from 5-phospho-alpha-D-ribose 1-diphosphate: step 6/9.</text>
</comment>
<comment type="subcellular location">
    <subcellularLocation>
        <location evidence="1">Cytoplasm</location>
    </subcellularLocation>
</comment>
<comment type="similarity">
    <text evidence="1">Belongs to the imidazoleglycerol-phosphate dehydratase family.</text>
</comment>
<reference key="1">
    <citation type="journal article" date="2009" name="Stand. Genomic Sci.">
        <title>Complete genome sequence of Methanoculleus marisnigri Romesser et al. 1981 type strain JR1.</title>
        <authorList>
            <person name="Anderson I.J."/>
            <person name="Sieprawska-Lupa M."/>
            <person name="Lapidus A."/>
            <person name="Nolan M."/>
            <person name="Copeland A."/>
            <person name="Glavina Del Rio T."/>
            <person name="Tice H."/>
            <person name="Dalin E."/>
            <person name="Barry K."/>
            <person name="Saunders E."/>
            <person name="Han C."/>
            <person name="Brettin T."/>
            <person name="Detter J.C."/>
            <person name="Bruce D."/>
            <person name="Mikhailova N."/>
            <person name="Pitluck S."/>
            <person name="Hauser L."/>
            <person name="Land M."/>
            <person name="Lucas S."/>
            <person name="Richardson P."/>
            <person name="Whitman W.B."/>
            <person name="Kyrpides N.C."/>
        </authorList>
    </citation>
    <scope>NUCLEOTIDE SEQUENCE [LARGE SCALE GENOMIC DNA]</scope>
    <source>
        <strain>ATCC 35101 / DSM 1498 / JR1</strain>
    </source>
</reference>